<gene>
    <name evidence="1" type="primary">groES</name>
    <name evidence="1" type="synonym">groS</name>
    <name type="ordered locus">Aave_0946</name>
</gene>
<keyword id="KW-0143">Chaperone</keyword>
<keyword id="KW-0963">Cytoplasm</keyword>
<name>CH10_PARC0</name>
<organism>
    <name type="scientific">Paracidovorax citrulli (strain AAC00-1)</name>
    <name type="common">Acidovorax citrulli</name>
    <dbReference type="NCBI Taxonomy" id="397945"/>
    <lineage>
        <taxon>Bacteria</taxon>
        <taxon>Pseudomonadati</taxon>
        <taxon>Pseudomonadota</taxon>
        <taxon>Betaproteobacteria</taxon>
        <taxon>Burkholderiales</taxon>
        <taxon>Comamonadaceae</taxon>
        <taxon>Paracidovorax</taxon>
    </lineage>
</organism>
<feature type="chain" id="PRO_1000025196" description="Co-chaperonin GroES">
    <location>
        <begin position="1"/>
        <end position="96"/>
    </location>
</feature>
<accession>A1TKQ6</accession>
<sequence length="96" mass="10347">MSLRPLHDRVIVKRIESETTTASGIVIPDNAAEKPDQGVVLAVGPGKKNDKGELSVLSVKVGDRVLFGKYSGQTVKVNGDELLVMKEDDLFAVVEK</sequence>
<protein>
    <recommendedName>
        <fullName evidence="1">Co-chaperonin GroES</fullName>
    </recommendedName>
    <alternativeName>
        <fullName evidence="1">10 kDa chaperonin</fullName>
    </alternativeName>
    <alternativeName>
        <fullName evidence="1">Chaperonin-10</fullName>
        <shortName evidence="1">Cpn10</shortName>
    </alternativeName>
</protein>
<evidence type="ECO:0000255" key="1">
    <source>
        <dbReference type="HAMAP-Rule" id="MF_00580"/>
    </source>
</evidence>
<reference key="1">
    <citation type="submission" date="2006-12" db="EMBL/GenBank/DDBJ databases">
        <title>Complete sequence of Acidovorax avenae subsp. citrulli AAC00-1.</title>
        <authorList>
            <person name="Copeland A."/>
            <person name="Lucas S."/>
            <person name="Lapidus A."/>
            <person name="Barry K."/>
            <person name="Detter J.C."/>
            <person name="Glavina del Rio T."/>
            <person name="Dalin E."/>
            <person name="Tice H."/>
            <person name="Pitluck S."/>
            <person name="Kiss H."/>
            <person name="Brettin T."/>
            <person name="Bruce D."/>
            <person name="Han C."/>
            <person name="Tapia R."/>
            <person name="Gilna P."/>
            <person name="Schmutz J."/>
            <person name="Larimer F."/>
            <person name="Land M."/>
            <person name="Hauser L."/>
            <person name="Kyrpides N."/>
            <person name="Kim E."/>
            <person name="Stahl D."/>
            <person name="Richardson P."/>
        </authorList>
    </citation>
    <scope>NUCLEOTIDE SEQUENCE [LARGE SCALE GENOMIC DNA]</scope>
    <source>
        <strain>AAC00-1</strain>
    </source>
</reference>
<comment type="function">
    <text evidence="1">Together with the chaperonin GroEL, plays an essential role in assisting protein folding. The GroEL-GroES system forms a nano-cage that allows encapsulation of the non-native substrate proteins and provides a physical environment optimized to promote and accelerate protein folding. GroES binds to the apical surface of the GroEL ring, thereby capping the opening of the GroEL channel.</text>
</comment>
<comment type="subunit">
    <text evidence="1">Heptamer of 7 subunits arranged in a ring. Interacts with the chaperonin GroEL.</text>
</comment>
<comment type="subcellular location">
    <subcellularLocation>
        <location evidence="1">Cytoplasm</location>
    </subcellularLocation>
</comment>
<comment type="similarity">
    <text evidence="1">Belongs to the GroES chaperonin family.</text>
</comment>
<dbReference type="EMBL" id="CP000512">
    <property type="protein sequence ID" value="ABM31544.1"/>
    <property type="molecule type" value="Genomic_DNA"/>
</dbReference>
<dbReference type="RefSeq" id="WP_011794102.1">
    <property type="nucleotide sequence ID" value="NC_008752.1"/>
</dbReference>
<dbReference type="SMR" id="A1TKQ6"/>
<dbReference type="STRING" id="397945.Aave_0946"/>
<dbReference type="GeneID" id="79790599"/>
<dbReference type="KEGG" id="aav:Aave_0946"/>
<dbReference type="eggNOG" id="COG0234">
    <property type="taxonomic scope" value="Bacteria"/>
</dbReference>
<dbReference type="HOGENOM" id="CLU_132825_1_1_4"/>
<dbReference type="OrthoDB" id="9806791at2"/>
<dbReference type="Proteomes" id="UP000002596">
    <property type="component" value="Chromosome"/>
</dbReference>
<dbReference type="GO" id="GO:0005737">
    <property type="term" value="C:cytoplasm"/>
    <property type="evidence" value="ECO:0007669"/>
    <property type="project" value="UniProtKB-SubCell"/>
</dbReference>
<dbReference type="GO" id="GO:0005524">
    <property type="term" value="F:ATP binding"/>
    <property type="evidence" value="ECO:0007669"/>
    <property type="project" value="InterPro"/>
</dbReference>
<dbReference type="GO" id="GO:0046872">
    <property type="term" value="F:metal ion binding"/>
    <property type="evidence" value="ECO:0007669"/>
    <property type="project" value="TreeGrafter"/>
</dbReference>
<dbReference type="GO" id="GO:0044183">
    <property type="term" value="F:protein folding chaperone"/>
    <property type="evidence" value="ECO:0007669"/>
    <property type="project" value="InterPro"/>
</dbReference>
<dbReference type="GO" id="GO:0051087">
    <property type="term" value="F:protein-folding chaperone binding"/>
    <property type="evidence" value="ECO:0007669"/>
    <property type="project" value="TreeGrafter"/>
</dbReference>
<dbReference type="GO" id="GO:0051082">
    <property type="term" value="F:unfolded protein binding"/>
    <property type="evidence" value="ECO:0007669"/>
    <property type="project" value="TreeGrafter"/>
</dbReference>
<dbReference type="GO" id="GO:0051085">
    <property type="term" value="P:chaperone cofactor-dependent protein refolding"/>
    <property type="evidence" value="ECO:0007669"/>
    <property type="project" value="TreeGrafter"/>
</dbReference>
<dbReference type="CDD" id="cd00320">
    <property type="entry name" value="cpn10"/>
    <property type="match status" value="1"/>
</dbReference>
<dbReference type="FunFam" id="2.30.33.40:FF:000001">
    <property type="entry name" value="10 kDa chaperonin"/>
    <property type="match status" value="1"/>
</dbReference>
<dbReference type="Gene3D" id="2.30.33.40">
    <property type="entry name" value="GroES chaperonin"/>
    <property type="match status" value="1"/>
</dbReference>
<dbReference type="HAMAP" id="MF_00580">
    <property type="entry name" value="CH10"/>
    <property type="match status" value="1"/>
</dbReference>
<dbReference type="InterPro" id="IPR020818">
    <property type="entry name" value="Chaperonin_GroES"/>
</dbReference>
<dbReference type="InterPro" id="IPR037124">
    <property type="entry name" value="Chaperonin_GroES_sf"/>
</dbReference>
<dbReference type="InterPro" id="IPR018369">
    <property type="entry name" value="Chaprnonin_Cpn10_CS"/>
</dbReference>
<dbReference type="InterPro" id="IPR011032">
    <property type="entry name" value="GroES-like_sf"/>
</dbReference>
<dbReference type="NCBIfam" id="NF001527">
    <property type="entry name" value="PRK00364.1-2"/>
    <property type="match status" value="1"/>
</dbReference>
<dbReference type="NCBIfam" id="NF001529">
    <property type="entry name" value="PRK00364.1-5"/>
    <property type="match status" value="1"/>
</dbReference>
<dbReference type="NCBIfam" id="NF001531">
    <property type="entry name" value="PRK00364.2-2"/>
    <property type="match status" value="1"/>
</dbReference>
<dbReference type="NCBIfam" id="NF001533">
    <property type="entry name" value="PRK00364.2-4"/>
    <property type="match status" value="1"/>
</dbReference>
<dbReference type="PANTHER" id="PTHR10772">
    <property type="entry name" value="10 KDA HEAT SHOCK PROTEIN"/>
    <property type="match status" value="1"/>
</dbReference>
<dbReference type="PANTHER" id="PTHR10772:SF58">
    <property type="entry name" value="CO-CHAPERONIN GROES"/>
    <property type="match status" value="1"/>
</dbReference>
<dbReference type="Pfam" id="PF00166">
    <property type="entry name" value="Cpn10"/>
    <property type="match status" value="1"/>
</dbReference>
<dbReference type="PRINTS" id="PR00297">
    <property type="entry name" value="CHAPERONIN10"/>
</dbReference>
<dbReference type="SMART" id="SM00883">
    <property type="entry name" value="Cpn10"/>
    <property type="match status" value="1"/>
</dbReference>
<dbReference type="SUPFAM" id="SSF50129">
    <property type="entry name" value="GroES-like"/>
    <property type="match status" value="1"/>
</dbReference>
<dbReference type="PROSITE" id="PS00681">
    <property type="entry name" value="CHAPERONINS_CPN10"/>
    <property type="match status" value="1"/>
</dbReference>
<proteinExistence type="inferred from homology"/>